<accession>Q95JH6</accession>
<proteinExistence type="evidence at transcript level"/>
<protein>
    <recommendedName>
        <fullName evidence="2">Aldo-keto reductase family 1 member C1</fullName>
        <ecNumber evidence="2">1.1.1.-</ecNumber>
        <ecNumber evidence="2">1.1.1.112</ecNumber>
        <ecNumber evidence="2">1.1.1.209</ecNumber>
        <ecNumber evidence="2">1.1.1.210</ecNumber>
        <ecNumber evidence="2">1.1.1.357</ecNumber>
        <ecNumber evidence="2">1.1.1.51</ecNumber>
        <ecNumber evidence="2">1.1.1.53</ecNumber>
        <ecNumber evidence="2">1.1.1.62</ecNumber>
        <ecNumber evidence="2">1.3.1.20</ecNumber>
    </recommendedName>
    <alternativeName>
        <fullName>20-alpha-hydroxysteroid dehydrogenase</fullName>
        <shortName>20-alpha-HSD</shortName>
        <ecNumber evidence="2">1.1.1.149</ecNumber>
    </alternativeName>
    <alternativeName>
        <fullName>Dihydrodiol dehydrogenase 1</fullName>
        <shortName>DD-1</shortName>
        <shortName>DD1</shortName>
    </alternativeName>
</protein>
<name>AK1C1_MACFU</name>
<gene>
    <name type="primary">AKR1C1</name>
</gene>
<organism>
    <name type="scientific">Macaca fuscata fuscata</name>
    <name type="common">Japanese macaque</name>
    <dbReference type="NCBI Taxonomy" id="9543"/>
    <lineage>
        <taxon>Eukaryota</taxon>
        <taxon>Metazoa</taxon>
        <taxon>Chordata</taxon>
        <taxon>Craniata</taxon>
        <taxon>Vertebrata</taxon>
        <taxon>Euteleostomi</taxon>
        <taxon>Mammalia</taxon>
        <taxon>Eutheria</taxon>
        <taxon>Euarchontoglires</taxon>
        <taxon>Primates</taxon>
        <taxon>Haplorrhini</taxon>
        <taxon>Catarrhini</taxon>
        <taxon>Cercopithecidae</taxon>
        <taxon>Cercopithecinae</taxon>
        <taxon>Macaca</taxon>
    </lineage>
</organism>
<evidence type="ECO:0000250" key="1"/>
<evidence type="ECO:0000250" key="2">
    <source>
        <dbReference type="UniProtKB" id="Q04828"/>
    </source>
</evidence>
<evidence type="ECO:0000269" key="3">
    <source>
    </source>
</evidence>
<evidence type="ECO:0000305" key="4"/>
<comment type="function">
    <text evidence="2">Cytosolic aldo-keto reductase that catalyzes the NADH and NADPH-dependent reduction of ketosteroids to hydroxysteroids. Most probably acts as a reductase in vivo since the oxidase activity measured in vitro is inhibited by physiological concentrations of NADPH. Displays a broad positional specificity acting on positions 3, 17 and 20 of steroids and regulates the metabolism of hormones like estrogens and androgens. May also reduce conjugated steroids such as 5alpha-dihydrotestosterone sulfate. Displays affinity for bile acids.</text>
</comment>
<comment type="catalytic activity">
    <reaction evidence="2">
        <text>a 3alpha-hydroxysteroid + NADP(+) = a 3-oxosteroid + NADPH + H(+)</text>
        <dbReference type="Rhea" id="RHEA:34783"/>
        <dbReference type="ChEBI" id="CHEBI:15378"/>
        <dbReference type="ChEBI" id="CHEBI:36835"/>
        <dbReference type="ChEBI" id="CHEBI:47788"/>
        <dbReference type="ChEBI" id="CHEBI:57783"/>
        <dbReference type="ChEBI" id="CHEBI:58349"/>
        <dbReference type="EC" id="1.1.1.357"/>
    </reaction>
</comment>
<comment type="catalytic activity">
    <reaction evidence="2">
        <text>a 3alpha-hydroxysteroid + NAD(+) = a 3-oxosteroid + NADH + H(+)</text>
        <dbReference type="Rhea" id="RHEA:34779"/>
        <dbReference type="ChEBI" id="CHEBI:15378"/>
        <dbReference type="ChEBI" id="CHEBI:36835"/>
        <dbReference type="ChEBI" id="CHEBI:47788"/>
        <dbReference type="ChEBI" id="CHEBI:57540"/>
        <dbReference type="ChEBI" id="CHEBI:57945"/>
        <dbReference type="EC" id="1.1.1.357"/>
    </reaction>
</comment>
<comment type="catalytic activity">
    <reaction evidence="2">
        <text>(17R,20S)-17,20-dihydroxypregn-4-en-3-one + NADP(+) = 17alpha-hydroxyprogesterone + NADPH + H(+)</text>
        <dbReference type="Rhea" id="RHEA:15857"/>
        <dbReference type="ChEBI" id="CHEBI:15378"/>
        <dbReference type="ChEBI" id="CHEBI:16418"/>
        <dbReference type="ChEBI" id="CHEBI:17252"/>
        <dbReference type="ChEBI" id="CHEBI:57783"/>
        <dbReference type="ChEBI" id="CHEBI:58349"/>
        <dbReference type="EC" id="1.1.1.149"/>
    </reaction>
    <physiologicalReaction direction="right-to-left" evidence="2">
        <dbReference type="Rhea" id="RHEA:15859"/>
    </physiologicalReaction>
</comment>
<comment type="catalytic activity">
    <reaction evidence="2">
        <text>(17R,20S)-17,20-dihydroxypregn-4-en-3-one + NAD(+) = 17alpha-hydroxyprogesterone + NADH + H(+)</text>
        <dbReference type="Rhea" id="RHEA:15853"/>
        <dbReference type="ChEBI" id="CHEBI:15378"/>
        <dbReference type="ChEBI" id="CHEBI:16418"/>
        <dbReference type="ChEBI" id="CHEBI:17252"/>
        <dbReference type="ChEBI" id="CHEBI:57540"/>
        <dbReference type="ChEBI" id="CHEBI:57945"/>
        <dbReference type="EC" id="1.1.1.149"/>
    </reaction>
    <physiologicalReaction direction="right-to-left" evidence="2">
        <dbReference type="Rhea" id="RHEA:15855"/>
    </physiologicalReaction>
</comment>
<comment type="catalytic activity">
    <reaction evidence="2">
        <text>(20S)-hydroxypregn-4-en-3-one + NADP(+) = progesterone + NADPH + H(+)</text>
        <dbReference type="Rhea" id="RHEA:42112"/>
        <dbReference type="ChEBI" id="CHEBI:15378"/>
        <dbReference type="ChEBI" id="CHEBI:17026"/>
        <dbReference type="ChEBI" id="CHEBI:28453"/>
        <dbReference type="ChEBI" id="CHEBI:57783"/>
        <dbReference type="ChEBI" id="CHEBI:58349"/>
    </reaction>
    <physiologicalReaction direction="left-to-right" evidence="2">
        <dbReference type="Rhea" id="RHEA:42113"/>
    </physiologicalReaction>
    <physiologicalReaction direction="right-to-left" evidence="2">
        <dbReference type="Rhea" id="RHEA:42114"/>
    </physiologicalReaction>
</comment>
<comment type="catalytic activity">
    <reaction evidence="2">
        <text>(20S)-hydroxypregn-4-en-3-one + NAD(+) = progesterone + NADH + H(+)</text>
        <dbReference type="Rhea" id="RHEA:42108"/>
        <dbReference type="ChEBI" id="CHEBI:15378"/>
        <dbReference type="ChEBI" id="CHEBI:17026"/>
        <dbReference type="ChEBI" id="CHEBI:28453"/>
        <dbReference type="ChEBI" id="CHEBI:57540"/>
        <dbReference type="ChEBI" id="CHEBI:57945"/>
    </reaction>
    <physiologicalReaction direction="left-to-right" evidence="2">
        <dbReference type="Rhea" id="RHEA:42109"/>
    </physiologicalReaction>
    <physiologicalReaction direction="right-to-left" evidence="2">
        <dbReference type="Rhea" id="RHEA:42110"/>
    </physiologicalReaction>
</comment>
<comment type="catalytic activity">
    <reaction evidence="2">
        <text>(1R,2R)-1,2-dihydrobenzene-1,2-diol + NADP(+) = catechol + NADPH + H(+)</text>
        <dbReference type="Rhea" id="RHEA:16729"/>
        <dbReference type="ChEBI" id="CHEBI:10702"/>
        <dbReference type="ChEBI" id="CHEBI:15378"/>
        <dbReference type="ChEBI" id="CHEBI:18135"/>
        <dbReference type="ChEBI" id="CHEBI:57783"/>
        <dbReference type="ChEBI" id="CHEBI:58349"/>
        <dbReference type="EC" id="1.3.1.20"/>
    </reaction>
</comment>
<comment type="catalytic activity">
    <reaction evidence="2">
        <text>(S)-indan-1-ol + NAD(+) = indan-1-one + NADH + H(+)</text>
        <dbReference type="Rhea" id="RHEA:16317"/>
        <dbReference type="ChEBI" id="CHEBI:15378"/>
        <dbReference type="ChEBI" id="CHEBI:17404"/>
        <dbReference type="ChEBI" id="CHEBI:57540"/>
        <dbReference type="ChEBI" id="CHEBI:57945"/>
        <dbReference type="ChEBI" id="CHEBI:156384"/>
        <dbReference type="EC" id="1.1.1.112"/>
    </reaction>
</comment>
<comment type="catalytic activity">
    <reaction evidence="2">
        <text>(S)-indan-1-ol + NADP(+) = indan-1-one + NADPH + H(+)</text>
        <dbReference type="Rhea" id="RHEA:16321"/>
        <dbReference type="ChEBI" id="CHEBI:15378"/>
        <dbReference type="ChEBI" id="CHEBI:17404"/>
        <dbReference type="ChEBI" id="CHEBI:57783"/>
        <dbReference type="ChEBI" id="CHEBI:58349"/>
        <dbReference type="ChEBI" id="CHEBI:156384"/>
        <dbReference type="EC" id="1.1.1.112"/>
    </reaction>
</comment>
<comment type="catalytic activity">
    <reaction evidence="2">
        <text>5alpha-androstane-3alpha,17beta-diol + NADP(+) = 17beta-hydroxy-5alpha-androstan-3-one + NADPH + H(+)</text>
        <dbReference type="Rhea" id="RHEA:42116"/>
        <dbReference type="ChEBI" id="CHEBI:15378"/>
        <dbReference type="ChEBI" id="CHEBI:16330"/>
        <dbReference type="ChEBI" id="CHEBI:36713"/>
        <dbReference type="ChEBI" id="CHEBI:57783"/>
        <dbReference type="ChEBI" id="CHEBI:58349"/>
    </reaction>
    <physiologicalReaction direction="right-to-left" evidence="2">
        <dbReference type="Rhea" id="RHEA:42118"/>
    </physiologicalReaction>
</comment>
<comment type="catalytic activity">
    <reaction evidence="2">
        <text>5alpha-androstane-3beta,17beta-diol + NADP(+) = 17beta-hydroxy-5alpha-androstan-3-one + NADPH + H(+)</text>
        <dbReference type="Rhea" id="RHEA:16297"/>
        <dbReference type="ChEBI" id="CHEBI:15378"/>
        <dbReference type="ChEBI" id="CHEBI:16330"/>
        <dbReference type="ChEBI" id="CHEBI:18329"/>
        <dbReference type="ChEBI" id="CHEBI:57783"/>
        <dbReference type="ChEBI" id="CHEBI:58349"/>
        <dbReference type="EC" id="1.1.1.210"/>
    </reaction>
    <physiologicalReaction direction="right-to-left" evidence="2">
        <dbReference type="Rhea" id="RHEA:16299"/>
    </physiologicalReaction>
</comment>
<comment type="catalytic activity">
    <reaction evidence="2">
        <text>5alpha-androstane-3alpha,17beta-diol + NAD(+) = 17beta-hydroxy-5alpha-androstan-3-one + NADH + H(+)</text>
        <dbReference type="Rhea" id="RHEA:42004"/>
        <dbReference type="ChEBI" id="CHEBI:15378"/>
        <dbReference type="ChEBI" id="CHEBI:16330"/>
        <dbReference type="ChEBI" id="CHEBI:36713"/>
        <dbReference type="ChEBI" id="CHEBI:57540"/>
        <dbReference type="ChEBI" id="CHEBI:57945"/>
        <dbReference type="EC" id="1.1.1.53"/>
    </reaction>
    <physiologicalReaction direction="right-to-left" evidence="2">
        <dbReference type="Rhea" id="RHEA:42006"/>
    </physiologicalReaction>
</comment>
<comment type="catalytic activity">
    <reaction evidence="2">
        <text>17beta-hydroxy-5alpha-androstan-3-one + NADP(+) = 5alpha-androstan-3,17-dione + NADPH + H(+)</text>
        <dbReference type="Rhea" id="RHEA:42120"/>
        <dbReference type="ChEBI" id="CHEBI:15378"/>
        <dbReference type="ChEBI" id="CHEBI:15994"/>
        <dbReference type="ChEBI" id="CHEBI:16330"/>
        <dbReference type="ChEBI" id="CHEBI:57783"/>
        <dbReference type="ChEBI" id="CHEBI:58349"/>
    </reaction>
    <physiologicalReaction direction="right-to-left" evidence="2">
        <dbReference type="Rhea" id="RHEA:42122"/>
    </physiologicalReaction>
</comment>
<comment type="catalytic activity">
    <reaction evidence="2">
        <text>androsterone + NADP(+) = 5alpha-androstan-3,17-dione + NADPH + H(+)</text>
        <dbReference type="Rhea" id="RHEA:20377"/>
        <dbReference type="ChEBI" id="CHEBI:15378"/>
        <dbReference type="ChEBI" id="CHEBI:15994"/>
        <dbReference type="ChEBI" id="CHEBI:16032"/>
        <dbReference type="ChEBI" id="CHEBI:57783"/>
        <dbReference type="ChEBI" id="CHEBI:58349"/>
        <dbReference type="EC" id="1.1.1.209"/>
    </reaction>
    <physiologicalReaction direction="right-to-left" evidence="2">
        <dbReference type="Rhea" id="RHEA:20379"/>
    </physiologicalReaction>
</comment>
<comment type="catalytic activity">
    <reaction evidence="2">
        <text>androsterone + NADPH + H(+) = 5alpha-androstane-3alpha,17beta-diol + NADP(+)</text>
        <dbReference type="Rhea" id="RHEA:42156"/>
        <dbReference type="ChEBI" id="CHEBI:15378"/>
        <dbReference type="ChEBI" id="CHEBI:16032"/>
        <dbReference type="ChEBI" id="CHEBI:36713"/>
        <dbReference type="ChEBI" id="CHEBI:57783"/>
        <dbReference type="ChEBI" id="CHEBI:58349"/>
    </reaction>
    <physiologicalReaction direction="left-to-right" evidence="2">
        <dbReference type="Rhea" id="RHEA:42157"/>
    </physiologicalReaction>
    <physiologicalReaction direction="right-to-left" evidence="2">
        <dbReference type="Rhea" id="RHEA:42158"/>
    </physiologicalReaction>
</comment>
<comment type="catalytic activity">
    <reaction evidence="2">
        <text>5alpha-androstane-3alpha,17beta-diol + NAD(+) = androsterone + NADH + H(+)</text>
        <dbReference type="Rhea" id="RHEA:42124"/>
        <dbReference type="ChEBI" id="CHEBI:15378"/>
        <dbReference type="ChEBI" id="CHEBI:16032"/>
        <dbReference type="ChEBI" id="CHEBI:36713"/>
        <dbReference type="ChEBI" id="CHEBI:57540"/>
        <dbReference type="ChEBI" id="CHEBI:57945"/>
    </reaction>
    <physiologicalReaction direction="right-to-left" evidence="2">
        <dbReference type="Rhea" id="RHEA:42126"/>
    </physiologicalReaction>
</comment>
<comment type="catalytic activity">
    <reaction evidence="2">
        <text>17beta-estradiol + NADP(+) = estrone + NADPH + H(+)</text>
        <dbReference type="Rhea" id="RHEA:24616"/>
        <dbReference type="ChEBI" id="CHEBI:15378"/>
        <dbReference type="ChEBI" id="CHEBI:16469"/>
        <dbReference type="ChEBI" id="CHEBI:17263"/>
        <dbReference type="ChEBI" id="CHEBI:57783"/>
        <dbReference type="ChEBI" id="CHEBI:58349"/>
        <dbReference type="EC" id="1.1.1.62"/>
    </reaction>
    <physiologicalReaction direction="left-to-right" evidence="2">
        <dbReference type="Rhea" id="RHEA:24617"/>
    </physiologicalReaction>
    <physiologicalReaction direction="right-to-left" evidence="2">
        <dbReference type="Rhea" id="RHEA:24618"/>
    </physiologicalReaction>
</comment>
<comment type="catalytic activity">
    <reaction evidence="2">
        <text>17beta-estradiol + NAD(+) = estrone + NADH + H(+)</text>
        <dbReference type="Rhea" id="RHEA:24612"/>
        <dbReference type="ChEBI" id="CHEBI:15378"/>
        <dbReference type="ChEBI" id="CHEBI:16469"/>
        <dbReference type="ChEBI" id="CHEBI:17263"/>
        <dbReference type="ChEBI" id="CHEBI:57540"/>
        <dbReference type="ChEBI" id="CHEBI:57945"/>
        <dbReference type="EC" id="1.1.1.62"/>
    </reaction>
    <physiologicalReaction direction="left-to-right" evidence="2">
        <dbReference type="Rhea" id="RHEA:24613"/>
    </physiologicalReaction>
    <physiologicalReaction direction="right-to-left" evidence="2">
        <dbReference type="Rhea" id="RHEA:24614"/>
    </physiologicalReaction>
</comment>
<comment type="catalytic activity">
    <reaction evidence="2">
        <text>testosterone + NADP(+) = androst-4-ene-3,17-dione + NADPH + H(+)</text>
        <dbReference type="Rhea" id="RHEA:14981"/>
        <dbReference type="ChEBI" id="CHEBI:15378"/>
        <dbReference type="ChEBI" id="CHEBI:16422"/>
        <dbReference type="ChEBI" id="CHEBI:17347"/>
        <dbReference type="ChEBI" id="CHEBI:57783"/>
        <dbReference type="ChEBI" id="CHEBI:58349"/>
        <dbReference type="EC" id="1.1.1.51"/>
    </reaction>
    <physiologicalReaction direction="right-to-left" evidence="2">
        <dbReference type="Rhea" id="RHEA:14983"/>
    </physiologicalReaction>
</comment>
<comment type="catalytic activity">
    <reaction evidence="2">
        <text>20alpha-hydroxy-5beta-pregnan-3-one + NADP(+) = 5beta-pregnan-3,20-dione + NADPH + H(+)</text>
        <dbReference type="Rhea" id="RHEA:42168"/>
        <dbReference type="ChEBI" id="CHEBI:15378"/>
        <dbReference type="ChEBI" id="CHEBI:30154"/>
        <dbReference type="ChEBI" id="CHEBI:57783"/>
        <dbReference type="ChEBI" id="CHEBI:58349"/>
        <dbReference type="ChEBI" id="CHEBI:78666"/>
    </reaction>
    <physiologicalReaction direction="right-to-left" evidence="2">
        <dbReference type="Rhea" id="RHEA:42170"/>
    </physiologicalReaction>
</comment>
<comment type="catalytic activity">
    <reaction evidence="2">
        <text>3beta-hydroxy-5beta-pregnane-20-one + NADP(+) = 5beta-pregnan-3,20-dione + NADPH + H(+)</text>
        <dbReference type="Rhea" id="RHEA:22944"/>
        <dbReference type="ChEBI" id="CHEBI:15378"/>
        <dbReference type="ChEBI" id="CHEBI:16229"/>
        <dbReference type="ChEBI" id="CHEBI:30154"/>
        <dbReference type="ChEBI" id="CHEBI:57783"/>
        <dbReference type="ChEBI" id="CHEBI:58349"/>
    </reaction>
    <physiologicalReaction direction="right-to-left" evidence="2">
        <dbReference type="Rhea" id="RHEA:22946"/>
    </physiologicalReaction>
</comment>
<comment type="catalytic activity">
    <reaction evidence="2">
        <text>3beta-hydroxy-5beta-pregnane-20-one + NADPH + H(+) = 3beta,20alpha-dihydroxy-5beta-pregnane + NADP(+)</text>
        <dbReference type="Rhea" id="RHEA:65496"/>
        <dbReference type="ChEBI" id="CHEBI:15378"/>
        <dbReference type="ChEBI" id="CHEBI:16229"/>
        <dbReference type="ChEBI" id="CHEBI:57783"/>
        <dbReference type="ChEBI" id="CHEBI:58349"/>
        <dbReference type="ChEBI" id="CHEBI:156526"/>
    </reaction>
    <physiologicalReaction direction="left-to-right" evidence="2">
        <dbReference type="Rhea" id="RHEA:65497"/>
    </physiologicalReaction>
</comment>
<comment type="catalytic activity">
    <reaction evidence="2">
        <text>(3beta,5alpha,17beta)-3-hydroxyandrostan-17-yl sulfate + NADP(+) = 5alpha-dihydrotestosterone sulfate + NADPH + H(+)</text>
        <dbReference type="Rhea" id="RHEA:53120"/>
        <dbReference type="ChEBI" id="CHEBI:15378"/>
        <dbReference type="ChEBI" id="CHEBI:57783"/>
        <dbReference type="ChEBI" id="CHEBI:58349"/>
        <dbReference type="ChEBI" id="CHEBI:136982"/>
        <dbReference type="ChEBI" id="CHEBI:136983"/>
    </reaction>
    <physiologicalReaction direction="right-to-left" evidence="2">
        <dbReference type="Rhea" id="RHEA:53122"/>
    </physiologicalReaction>
</comment>
<comment type="pathway">
    <text evidence="2">Steroid metabolism.</text>
</comment>
<comment type="subunit">
    <text evidence="2">Monomer.</text>
</comment>
<comment type="subcellular location">
    <subcellularLocation>
        <location evidence="2">Cytoplasm</location>
        <location evidence="2">Cytosol</location>
    </subcellularLocation>
</comment>
<comment type="tissue specificity">
    <text evidence="3">Expressed in liver, adrenal gland, intestine and kidney.</text>
</comment>
<comment type="similarity">
    <text evidence="4">Belongs to the aldo/keto reductase family.</text>
</comment>
<sequence>MDSKHQCVKLNDGHFMPVLGFGTYAPAEVPKNKAIEATKLAIEAGFRHIDSAHLYNNEEYVGLAIRSKIADGTVKREDIFYTSKLWCNSHRPEFVRPALERSLKNLQLDYVDLYLIHFPVSLKPGEELIPKDENGKLLFDTVDLCATWEAMEKCKDAGLAKSIGVSNFNRRQLEMILNKPGLKYKPVCNQVECHPYLNQRKLLDFCKSKDIVLVAYSALGSHREKPWVDQNSPVLLEDPVLCALAKKHKRTPALIALRYQLQRGVVVLAKSYNEQRIRENMKVFEFQLTSEDMKAIDGLDRNIRYLTLDIFAGPPNYPFSDEY</sequence>
<keyword id="KW-0963">Cytoplasm</keyword>
<keyword id="KW-0443">Lipid metabolism</keyword>
<keyword id="KW-0521">NADP</keyword>
<keyword id="KW-0560">Oxidoreductase</keyword>
<dbReference type="EC" id="1.1.1.-" evidence="2"/>
<dbReference type="EC" id="1.1.1.112" evidence="2"/>
<dbReference type="EC" id="1.1.1.209" evidence="2"/>
<dbReference type="EC" id="1.1.1.210" evidence="2"/>
<dbReference type="EC" id="1.1.1.357" evidence="2"/>
<dbReference type="EC" id="1.1.1.51" evidence="2"/>
<dbReference type="EC" id="1.1.1.53" evidence="2"/>
<dbReference type="EC" id="1.1.1.62" evidence="2"/>
<dbReference type="EC" id="1.3.1.20" evidence="2"/>
<dbReference type="EC" id="1.1.1.149" evidence="2"/>
<dbReference type="EMBL" id="AB070210">
    <property type="protein sequence ID" value="BAB63207.1"/>
    <property type="molecule type" value="mRNA"/>
</dbReference>
<dbReference type="SMR" id="Q95JH6"/>
<dbReference type="BRENDA" id="1.3.1.20">
    <property type="organism ID" value="3123"/>
</dbReference>
<dbReference type="GO" id="GO:0005829">
    <property type="term" value="C:cytosol"/>
    <property type="evidence" value="ECO:0000250"/>
    <property type="project" value="UniProtKB"/>
</dbReference>
<dbReference type="GO" id="GO:0047006">
    <property type="term" value="F:17-alpha,20-alpha-dihydroxypregn-4-en-3-one dehydrogenase [NAD(P)+] activity"/>
    <property type="evidence" value="ECO:0007669"/>
    <property type="project" value="UniProtKB-EC"/>
</dbReference>
<dbReference type="GO" id="GO:0033703">
    <property type="term" value="F:3-beta-hydroxy-5-beta-steroid dehydrogenase (NADP+) activity"/>
    <property type="evidence" value="ECO:0007669"/>
    <property type="project" value="RHEA"/>
</dbReference>
<dbReference type="GO" id="GO:0047024">
    <property type="term" value="F:5-alpha-androstane-3-beta,17-beta-diol dehydrogenase (NADP+) activity"/>
    <property type="evidence" value="ECO:0007669"/>
    <property type="project" value="UniProtKB-EC"/>
</dbReference>
<dbReference type="GO" id="GO:0047044">
    <property type="term" value="F:androstan-3-alpha,17-beta-diol dehydrogenase (NAD+) activity"/>
    <property type="evidence" value="ECO:0007669"/>
    <property type="project" value="UniProtKB-EC"/>
</dbReference>
<dbReference type="GO" id="GO:0047042">
    <property type="term" value="F:androsterone dehydrogenase (B-specific) activity"/>
    <property type="evidence" value="ECO:0000250"/>
    <property type="project" value="UniProtKB"/>
</dbReference>
<dbReference type="GO" id="GO:0032052">
    <property type="term" value="F:bile acid binding"/>
    <property type="evidence" value="ECO:0000250"/>
    <property type="project" value="UniProtKB"/>
</dbReference>
<dbReference type="GO" id="GO:0031406">
    <property type="term" value="F:carboxylic acid binding"/>
    <property type="evidence" value="ECO:0000250"/>
    <property type="project" value="UniProtKB"/>
</dbReference>
<dbReference type="GO" id="GO:0004303">
    <property type="term" value="F:estradiol 17-beta-dehydrogenase [NAD(P)+] activity"/>
    <property type="evidence" value="ECO:0007669"/>
    <property type="project" value="UniProtKB-EC"/>
</dbReference>
<dbReference type="GO" id="GO:0047718">
    <property type="term" value="F:indanol dehydrogenase activity"/>
    <property type="evidence" value="ECO:0007669"/>
    <property type="project" value="UniProtKB-EC"/>
</dbReference>
<dbReference type="GO" id="GO:0047045">
    <property type="term" value="F:testosterone 17-beta-dehydrogenase (NADP+) activity"/>
    <property type="evidence" value="ECO:0007669"/>
    <property type="project" value="RHEA"/>
</dbReference>
<dbReference type="GO" id="GO:0047115">
    <property type="term" value="F:trans-1,2-dihydrobenzene-1,2-diol dehydrogenase activity"/>
    <property type="evidence" value="ECO:0000250"/>
    <property type="project" value="UniProtKB"/>
</dbReference>
<dbReference type="GO" id="GO:0008206">
    <property type="term" value="P:bile acid metabolic process"/>
    <property type="evidence" value="ECO:0000250"/>
    <property type="project" value="UniProtKB"/>
</dbReference>
<dbReference type="GO" id="GO:0007586">
    <property type="term" value="P:digestion"/>
    <property type="evidence" value="ECO:0000250"/>
    <property type="project" value="UniProtKB"/>
</dbReference>
<dbReference type="CDD" id="cd19108">
    <property type="entry name" value="AKR_AKR1C1-35"/>
    <property type="match status" value="1"/>
</dbReference>
<dbReference type="FunFam" id="3.20.20.100:FF:000003">
    <property type="entry name" value="Aldo-keto reductase family 1 member C3"/>
    <property type="match status" value="1"/>
</dbReference>
<dbReference type="Gene3D" id="3.20.20.100">
    <property type="entry name" value="NADP-dependent oxidoreductase domain"/>
    <property type="match status" value="1"/>
</dbReference>
<dbReference type="InterPro" id="IPR020471">
    <property type="entry name" value="AKR"/>
</dbReference>
<dbReference type="InterPro" id="IPR044482">
    <property type="entry name" value="AKR1C"/>
</dbReference>
<dbReference type="InterPro" id="IPR018170">
    <property type="entry name" value="Aldo/ket_reductase_CS"/>
</dbReference>
<dbReference type="InterPro" id="IPR023210">
    <property type="entry name" value="NADP_OxRdtase_dom"/>
</dbReference>
<dbReference type="InterPro" id="IPR036812">
    <property type="entry name" value="NADP_OxRdtase_dom_sf"/>
</dbReference>
<dbReference type="PANTHER" id="PTHR11732">
    <property type="entry name" value="ALDO/KETO REDUCTASE"/>
    <property type="match status" value="1"/>
</dbReference>
<dbReference type="Pfam" id="PF00248">
    <property type="entry name" value="Aldo_ket_red"/>
    <property type="match status" value="1"/>
</dbReference>
<dbReference type="PIRSF" id="PIRSF000097">
    <property type="entry name" value="AKR"/>
    <property type="match status" value="1"/>
</dbReference>
<dbReference type="PRINTS" id="PR00069">
    <property type="entry name" value="ALDKETRDTASE"/>
</dbReference>
<dbReference type="SUPFAM" id="SSF51430">
    <property type="entry name" value="NAD(P)-linked oxidoreductase"/>
    <property type="match status" value="1"/>
</dbReference>
<dbReference type="PROSITE" id="PS00798">
    <property type="entry name" value="ALDOKETO_REDUCTASE_1"/>
    <property type="match status" value="1"/>
</dbReference>
<dbReference type="PROSITE" id="PS00062">
    <property type="entry name" value="ALDOKETO_REDUCTASE_2"/>
    <property type="match status" value="1"/>
</dbReference>
<dbReference type="PROSITE" id="PS00063">
    <property type="entry name" value="ALDOKETO_REDUCTASE_3"/>
    <property type="match status" value="1"/>
</dbReference>
<reference key="1">
    <citation type="journal article" date="2002" name="Drug Metab. Pharmacokinet.">
        <title>Molecular characterization of two monkey dihydrodiol dehydrogenases.</title>
        <authorList>
            <person name="Higaki Y."/>
            <person name="Kamiya T."/>
            <person name="Usami N."/>
            <person name="Shintani S."/>
            <person name="Shiraishi H."/>
            <person name="Ishikura S."/>
            <person name="Yamamoto I."/>
            <person name="Hara A."/>
        </authorList>
    </citation>
    <scope>NUCLEOTIDE SEQUENCE [MRNA]</scope>
    <scope>TISSUE SPECIFICITY</scope>
    <source>
        <tissue>Liver</tissue>
    </source>
</reference>
<feature type="chain" id="PRO_0000124635" description="Aldo-keto reductase family 1 member C1">
    <location>
        <begin position="1"/>
        <end position="323"/>
    </location>
</feature>
<feature type="active site" description="Proton donor" evidence="1">
    <location>
        <position position="55"/>
    </location>
</feature>
<feature type="binding site" evidence="1">
    <location>
        <begin position="20"/>
        <end position="24"/>
    </location>
    <ligand>
        <name>NADP(+)</name>
        <dbReference type="ChEBI" id="CHEBI:58349"/>
    </ligand>
</feature>
<feature type="binding site" evidence="1">
    <location>
        <position position="24"/>
    </location>
    <ligand>
        <name>substrate</name>
    </ligand>
</feature>
<feature type="binding site" evidence="1">
    <location>
        <position position="50"/>
    </location>
    <ligand>
        <name>NADP(+)</name>
        <dbReference type="ChEBI" id="CHEBI:58349"/>
    </ligand>
</feature>
<feature type="binding site" evidence="1">
    <location>
        <position position="117"/>
    </location>
    <ligand>
        <name>substrate</name>
    </ligand>
</feature>
<feature type="binding site" evidence="1">
    <location>
        <begin position="166"/>
        <end position="167"/>
    </location>
    <ligand>
        <name>NADP(+)</name>
        <dbReference type="ChEBI" id="CHEBI:58349"/>
    </ligand>
</feature>
<feature type="binding site" evidence="1">
    <location>
        <position position="190"/>
    </location>
    <ligand>
        <name>NADP(+)</name>
        <dbReference type="ChEBI" id="CHEBI:58349"/>
    </ligand>
</feature>
<feature type="binding site" evidence="1">
    <location>
        <begin position="216"/>
        <end position="222"/>
    </location>
    <ligand>
        <name>NADP(+)</name>
        <dbReference type="ChEBI" id="CHEBI:58349"/>
    </ligand>
</feature>
<feature type="binding site" evidence="1">
    <location>
        <position position="222"/>
    </location>
    <ligand>
        <name>substrate</name>
    </ligand>
</feature>
<feature type="binding site" evidence="1">
    <location>
        <position position="227"/>
    </location>
    <ligand>
        <name>substrate</name>
    </ligand>
</feature>
<feature type="binding site" evidence="1">
    <location>
        <begin position="270"/>
        <end position="280"/>
    </location>
    <ligand>
        <name>NADP(+)</name>
        <dbReference type="ChEBI" id="CHEBI:58349"/>
    </ligand>
</feature>
<feature type="site" description="Important for substrate specificity" evidence="1">
    <location>
        <position position="54"/>
    </location>
</feature>
<feature type="site" description="Lowers pKa of active site Tyr" evidence="1">
    <location>
        <position position="84"/>
    </location>
</feature>